<dbReference type="EC" id="6.3.4.21" evidence="1"/>
<dbReference type="EMBL" id="AL646052">
    <property type="protein sequence ID" value="CAD14733.1"/>
    <property type="status" value="ALT_INIT"/>
    <property type="molecule type" value="Genomic_DNA"/>
</dbReference>
<dbReference type="RefSeq" id="WP_193032783.1">
    <property type="nucleotide sequence ID" value="NC_003295.1"/>
</dbReference>
<dbReference type="SMR" id="Q8Y0L2"/>
<dbReference type="STRING" id="267608.RSc1031"/>
<dbReference type="EnsemblBacteria" id="CAD14733">
    <property type="protein sequence ID" value="CAD14733"/>
    <property type="gene ID" value="RSc1031"/>
</dbReference>
<dbReference type="KEGG" id="rso:RSc1031"/>
<dbReference type="eggNOG" id="COG1488">
    <property type="taxonomic scope" value="Bacteria"/>
</dbReference>
<dbReference type="HOGENOM" id="CLU_030991_1_0_4"/>
<dbReference type="UniPathway" id="UPA00253">
    <property type="reaction ID" value="UER00457"/>
</dbReference>
<dbReference type="Proteomes" id="UP000001436">
    <property type="component" value="Chromosome"/>
</dbReference>
<dbReference type="GO" id="GO:0005829">
    <property type="term" value="C:cytosol"/>
    <property type="evidence" value="ECO:0007669"/>
    <property type="project" value="TreeGrafter"/>
</dbReference>
<dbReference type="GO" id="GO:0004516">
    <property type="term" value="F:nicotinate phosphoribosyltransferase activity"/>
    <property type="evidence" value="ECO:0007669"/>
    <property type="project" value="UniProtKB-UniRule"/>
</dbReference>
<dbReference type="GO" id="GO:0034355">
    <property type="term" value="P:NAD biosynthetic process via the salvage pathway"/>
    <property type="evidence" value="ECO:0007669"/>
    <property type="project" value="TreeGrafter"/>
</dbReference>
<dbReference type="CDD" id="cd01401">
    <property type="entry name" value="PncB_like"/>
    <property type="match status" value="1"/>
</dbReference>
<dbReference type="Gene3D" id="3.20.140.10">
    <property type="entry name" value="nicotinate phosphoribosyltransferase"/>
    <property type="match status" value="1"/>
</dbReference>
<dbReference type="HAMAP" id="MF_00570">
    <property type="entry name" value="NAPRTase"/>
    <property type="match status" value="1"/>
</dbReference>
<dbReference type="InterPro" id="IPR041525">
    <property type="entry name" value="N/Namide_PRibTrfase"/>
</dbReference>
<dbReference type="InterPro" id="IPR040727">
    <property type="entry name" value="NAPRTase_N"/>
</dbReference>
<dbReference type="InterPro" id="IPR006406">
    <property type="entry name" value="Nic_PRibTrfase"/>
</dbReference>
<dbReference type="InterPro" id="IPR007229">
    <property type="entry name" value="Nic_PRibTrfase-Fam"/>
</dbReference>
<dbReference type="InterPro" id="IPR036068">
    <property type="entry name" value="Nicotinate_pribotase-like_C"/>
</dbReference>
<dbReference type="NCBIfam" id="TIGR01514">
    <property type="entry name" value="NAPRTase"/>
    <property type="match status" value="1"/>
</dbReference>
<dbReference type="NCBIfam" id="NF003704">
    <property type="entry name" value="PRK05321.1"/>
    <property type="match status" value="1"/>
</dbReference>
<dbReference type="PANTHER" id="PTHR11098">
    <property type="entry name" value="NICOTINATE PHOSPHORIBOSYLTRANSFERASE"/>
    <property type="match status" value="1"/>
</dbReference>
<dbReference type="PANTHER" id="PTHR11098:SF1">
    <property type="entry name" value="NICOTINATE PHOSPHORIBOSYLTRANSFERASE"/>
    <property type="match status" value="1"/>
</dbReference>
<dbReference type="Pfam" id="PF04095">
    <property type="entry name" value="NAPRTase"/>
    <property type="match status" value="1"/>
</dbReference>
<dbReference type="Pfam" id="PF17767">
    <property type="entry name" value="NAPRTase_N"/>
    <property type="match status" value="1"/>
</dbReference>
<dbReference type="PIRSF" id="PIRSF000484">
    <property type="entry name" value="NAPRT"/>
    <property type="match status" value="1"/>
</dbReference>
<dbReference type="SUPFAM" id="SSF51690">
    <property type="entry name" value="Nicotinate/Quinolinate PRTase C-terminal domain-like"/>
    <property type="match status" value="1"/>
</dbReference>
<dbReference type="SUPFAM" id="SSF54675">
    <property type="entry name" value="Nicotinate/Quinolinate PRTase N-terminal domain-like"/>
    <property type="match status" value="1"/>
</dbReference>
<accession>Q8Y0L2</accession>
<feature type="chain" id="PRO_0000205840" description="Nicotinate phosphoribosyltransferase">
    <location>
        <begin position="1"/>
        <end position="389"/>
    </location>
</feature>
<feature type="modified residue" description="Phosphohistidine; by autocatalysis" evidence="1">
    <location>
        <position position="216"/>
    </location>
</feature>
<proteinExistence type="inferred from homology"/>
<keyword id="KW-0436">Ligase</keyword>
<keyword id="KW-0597">Phosphoprotein</keyword>
<keyword id="KW-0662">Pyridine nucleotide biosynthesis</keyword>
<keyword id="KW-1185">Reference proteome</keyword>
<protein>
    <recommendedName>
        <fullName evidence="1">Nicotinate phosphoribosyltransferase</fullName>
        <shortName evidence="1">NAPRTase</shortName>
        <ecNumber evidence="1">6.3.4.21</ecNumber>
    </recommendedName>
</protein>
<evidence type="ECO:0000255" key="1">
    <source>
        <dbReference type="HAMAP-Rule" id="MF_00570"/>
    </source>
</evidence>
<evidence type="ECO:0000305" key="2"/>
<gene>
    <name evidence="1" type="primary">pncB</name>
    <name type="ordered locus">RSc1031</name>
    <name type="ORF">RS04219</name>
</gene>
<reference key="1">
    <citation type="journal article" date="2002" name="Nature">
        <title>Genome sequence of the plant pathogen Ralstonia solanacearum.</title>
        <authorList>
            <person name="Salanoubat M."/>
            <person name="Genin S."/>
            <person name="Artiguenave F."/>
            <person name="Gouzy J."/>
            <person name="Mangenot S."/>
            <person name="Arlat M."/>
            <person name="Billault A."/>
            <person name="Brottier P."/>
            <person name="Camus J.-C."/>
            <person name="Cattolico L."/>
            <person name="Chandler M."/>
            <person name="Choisne N."/>
            <person name="Claudel-Renard C."/>
            <person name="Cunnac S."/>
            <person name="Demange N."/>
            <person name="Gaspin C."/>
            <person name="Lavie M."/>
            <person name="Moisan A."/>
            <person name="Robert C."/>
            <person name="Saurin W."/>
            <person name="Schiex T."/>
            <person name="Siguier P."/>
            <person name="Thebault P."/>
            <person name="Whalen M."/>
            <person name="Wincker P."/>
            <person name="Levy M."/>
            <person name="Weissenbach J."/>
            <person name="Boucher C.A."/>
        </authorList>
    </citation>
    <scope>NUCLEOTIDE SEQUENCE [LARGE SCALE GENOMIC DNA]</scope>
    <source>
        <strain>ATCC BAA-1114 / GMI1000</strain>
    </source>
</reference>
<sequence>MIIRSLLDTDLYKFTMMQVVLHHFPGAHVEYRFKCRNPGVDLVPYIEAIRAEIRHLCSLRFTEAELDYLRGLRFIKSDFVDFLDLFHLSEKYIDIRPAASNDGQIDIVISGPWLHTIMFEVPVLAIVNEVYFSRTQAHPQWDEGKRRLTEKLASLTRPGLEDCRIADYGTRRRFSHTWHEHVLMEARSQLGSQYAGTSNVYFAMKHNMTPLGTMAHEYLQACQSLGPRLRDSQVFALETWAREYRGDLGIALSDTYGFDAFLRDFDMFFCKLFDGVRHDSGDPFEWGERMLKHYEGMRVDPQSKALIFSDSLDMPKVVRLYERFRSRCKLAFGVGTNLTNDLGYTPLQIVIKMVRCNGQPVAKLSDAPEKTMCDDPAYLAYLKQVFGVQ</sequence>
<name>PNCB_RALN1</name>
<comment type="function">
    <text evidence="1">Catalyzes the synthesis of beta-nicotinate D-ribonucleotide from nicotinate and 5-phospho-D-ribose 1-phosphate at the expense of ATP.</text>
</comment>
<comment type="catalytic activity">
    <reaction evidence="1">
        <text>nicotinate + 5-phospho-alpha-D-ribose 1-diphosphate + ATP + H2O = nicotinate beta-D-ribonucleotide + ADP + phosphate + diphosphate</text>
        <dbReference type="Rhea" id="RHEA:36163"/>
        <dbReference type="ChEBI" id="CHEBI:15377"/>
        <dbReference type="ChEBI" id="CHEBI:30616"/>
        <dbReference type="ChEBI" id="CHEBI:32544"/>
        <dbReference type="ChEBI" id="CHEBI:33019"/>
        <dbReference type="ChEBI" id="CHEBI:43474"/>
        <dbReference type="ChEBI" id="CHEBI:57502"/>
        <dbReference type="ChEBI" id="CHEBI:58017"/>
        <dbReference type="ChEBI" id="CHEBI:456216"/>
        <dbReference type="EC" id="6.3.4.21"/>
    </reaction>
</comment>
<comment type="pathway">
    <text evidence="1">Cofactor biosynthesis; NAD(+) biosynthesis; nicotinate D-ribonucleotide from nicotinate: step 1/1.</text>
</comment>
<comment type="PTM">
    <text evidence="1">Transiently phosphorylated on a His residue during the reaction cycle. Phosphorylation strongly increases the affinity for substrates and increases the rate of nicotinate D-ribonucleotide production. Dephosphorylation regenerates the low-affinity form of the enzyme, leading to product release.</text>
</comment>
<comment type="similarity">
    <text evidence="1">Belongs to the NAPRTase family.</text>
</comment>
<comment type="sequence caution" evidence="2">
    <conflict type="erroneous initiation">
        <sequence resource="EMBL-CDS" id="CAD14733"/>
    </conflict>
    <text>Truncated N-terminus.</text>
</comment>
<organism>
    <name type="scientific">Ralstonia nicotianae (strain ATCC BAA-1114 / GMI1000)</name>
    <name type="common">Ralstonia solanacearum</name>
    <dbReference type="NCBI Taxonomy" id="267608"/>
    <lineage>
        <taxon>Bacteria</taxon>
        <taxon>Pseudomonadati</taxon>
        <taxon>Pseudomonadota</taxon>
        <taxon>Betaproteobacteria</taxon>
        <taxon>Burkholderiales</taxon>
        <taxon>Burkholderiaceae</taxon>
        <taxon>Ralstonia</taxon>
        <taxon>Ralstonia solanacearum species complex</taxon>
    </lineage>
</organism>